<proteinExistence type="inferred from homology"/>
<protein>
    <recommendedName>
        <fullName>Lectin 1</fullName>
    </recommendedName>
</protein>
<organism>
    <name type="scientific">Medicago truncatula</name>
    <name type="common">Barrel medic</name>
    <name type="synonym">Medicago tribuloides</name>
    <dbReference type="NCBI Taxonomy" id="3880"/>
    <lineage>
        <taxon>Eukaryota</taxon>
        <taxon>Viridiplantae</taxon>
        <taxon>Streptophyta</taxon>
        <taxon>Embryophyta</taxon>
        <taxon>Tracheophyta</taxon>
        <taxon>Spermatophyta</taxon>
        <taxon>Magnoliopsida</taxon>
        <taxon>eudicotyledons</taxon>
        <taxon>Gunneridae</taxon>
        <taxon>Pentapetalae</taxon>
        <taxon>rosids</taxon>
        <taxon>fabids</taxon>
        <taxon>Fabales</taxon>
        <taxon>Fabaceae</taxon>
        <taxon>Papilionoideae</taxon>
        <taxon>50 kb inversion clade</taxon>
        <taxon>NPAAA clade</taxon>
        <taxon>Hologalegina</taxon>
        <taxon>IRL clade</taxon>
        <taxon>Trifolieae</taxon>
        <taxon>Medicago</taxon>
    </lineage>
</organism>
<evidence type="ECO:0000250" key="1"/>
<evidence type="ECO:0000255" key="2"/>
<evidence type="ECO:0000305" key="3"/>
<sequence length="277" mass="30550">MSFSSSNFYVILSISLTVFILLFNINKVNSTELTSFTITKFSQDQKNLIFQGNAITTSTGKLQLTKAVKNSIGRALYSAPIHIWDSKTGDVANFETLFTFAITAPYSSNVADGLAFFIAPVDTQPQNIGRAGFLGVFNSETYNKSIQTVAVEIDTFHNTWDPKINRHIGINVNCIKSISTTSWVLENGREANVLVRFDAHTNVLSVVLSYPGLPDSYILSDVVPLKDIVPEWVRIGFSAATGAEFAEHDIRYWSFHSELSLVFNNNNANVSSSVQSA</sequence>
<accession>Q01806</accession>
<name>LEC1_MEDTR</name>
<gene>
    <name type="primary">LEC1</name>
</gene>
<comment type="function">
    <text>Lectin that may be involved in a cell recognition process.</text>
</comment>
<comment type="miscellaneous">
    <text>Binds one manganese (or another transition metal) ion and one calcium ion. The metal ions are essential for the saccharide-binding and cell-agglutinating activities.</text>
</comment>
<comment type="similarity">
    <text evidence="3">Belongs to the leguminous lectin family.</text>
</comment>
<reference key="1">
    <citation type="journal article" date="1992" name="Plant Mol. Biol.">
        <title>Lectin genes from the legume Medicago truncatula.</title>
        <authorList>
            <person name="Bauchrowitz M.A."/>
            <person name="Barker D.G."/>
            <person name="Nadaud I."/>
            <person name="Rouge P."/>
            <person name="Lescure B."/>
        </authorList>
    </citation>
    <scope>NUCLEOTIDE SEQUENCE [GENOMIC DNA]</scope>
    <source>
        <strain>cv. Jemalong</strain>
    </source>
</reference>
<feature type="signal peptide" evidence="2">
    <location>
        <begin position="1"/>
        <end position="30"/>
    </location>
</feature>
<feature type="chain" id="PRO_0000017621" description="Lectin 1">
    <location>
        <begin position="31"/>
        <end position="277"/>
    </location>
</feature>
<feature type="binding site" evidence="1">
    <location>
        <position position="152"/>
    </location>
    <ligand>
        <name>Mn(2+)</name>
        <dbReference type="ChEBI" id="CHEBI:29035"/>
    </ligand>
</feature>
<feature type="binding site" evidence="1">
    <location>
        <position position="154"/>
    </location>
    <ligand>
        <name>Ca(2+)</name>
        <dbReference type="ChEBI" id="CHEBI:29108"/>
    </ligand>
</feature>
<feature type="binding site" evidence="1">
    <location>
        <position position="154"/>
    </location>
    <ligand>
        <name>Mn(2+)</name>
        <dbReference type="ChEBI" id="CHEBI:29035"/>
    </ligand>
</feature>
<feature type="binding site" evidence="1">
    <location>
        <position position="158"/>
    </location>
    <ligand>
        <name>Ca(2+)</name>
        <dbReference type="ChEBI" id="CHEBI:29108"/>
    </ligand>
</feature>
<feature type="binding site" evidence="1">
    <location>
        <position position="161"/>
    </location>
    <ligand>
        <name>Ca(2+)</name>
        <dbReference type="ChEBI" id="CHEBI:29108"/>
    </ligand>
</feature>
<feature type="binding site" evidence="1">
    <location>
        <position position="161"/>
    </location>
    <ligand>
        <name>Mn(2+)</name>
        <dbReference type="ChEBI" id="CHEBI:29035"/>
    </ligand>
</feature>
<feature type="binding site" evidence="1">
    <location>
        <position position="167"/>
    </location>
    <ligand>
        <name>Mn(2+)</name>
        <dbReference type="ChEBI" id="CHEBI:29035"/>
    </ligand>
</feature>
<feature type="glycosylation site" description="N-linked (GlcNAc...) asparagine" evidence="2">
    <location>
        <position position="143"/>
    </location>
</feature>
<feature type="glycosylation site" description="N-linked (GlcNAc...) asparagine" evidence="2">
    <location>
        <position position="269"/>
    </location>
</feature>
<keyword id="KW-0106">Calcium</keyword>
<keyword id="KW-0325">Glycoprotein</keyword>
<keyword id="KW-0430">Lectin</keyword>
<keyword id="KW-0464">Manganese</keyword>
<keyword id="KW-0465">Mannose-binding</keyword>
<keyword id="KW-0479">Metal-binding</keyword>
<keyword id="KW-0732">Signal</keyword>
<dbReference type="EMBL" id="X60386">
    <property type="protein sequence ID" value="CAA42937.1"/>
    <property type="molecule type" value="Genomic_DNA"/>
</dbReference>
<dbReference type="PIR" id="S25296">
    <property type="entry name" value="S25296"/>
</dbReference>
<dbReference type="RefSeq" id="XP_003627476.1">
    <property type="nucleotide sequence ID" value="XM_003627428.2"/>
</dbReference>
<dbReference type="SMR" id="Q01806"/>
<dbReference type="GlyCosmos" id="Q01806">
    <property type="glycosylation" value="2 sites, No reported glycans"/>
</dbReference>
<dbReference type="PaxDb" id="3880-AET01952"/>
<dbReference type="EnsemblPlants" id="rna45627">
    <property type="protein sequence ID" value="RHN39588.1"/>
    <property type="gene ID" value="gene45627"/>
</dbReference>
<dbReference type="GeneID" id="11445681"/>
<dbReference type="Gramene" id="rna45627">
    <property type="protein sequence ID" value="RHN39588.1"/>
    <property type="gene ID" value="gene45627"/>
</dbReference>
<dbReference type="KEGG" id="mtr:11445681"/>
<dbReference type="eggNOG" id="ENOG502QTX3">
    <property type="taxonomic scope" value="Eukaryota"/>
</dbReference>
<dbReference type="HOGENOM" id="CLU_000288_62_2_1"/>
<dbReference type="OMA" id="NGREANV"/>
<dbReference type="OrthoDB" id="2014373at2759"/>
<dbReference type="ExpressionAtlas" id="Q01806">
    <property type="expression patterns" value="differential"/>
</dbReference>
<dbReference type="GO" id="GO:0005537">
    <property type="term" value="F:D-mannose binding"/>
    <property type="evidence" value="ECO:0007669"/>
    <property type="project" value="UniProtKB-KW"/>
</dbReference>
<dbReference type="GO" id="GO:0046872">
    <property type="term" value="F:metal ion binding"/>
    <property type="evidence" value="ECO:0007669"/>
    <property type="project" value="UniProtKB-KW"/>
</dbReference>
<dbReference type="GO" id="GO:0009610">
    <property type="term" value="P:response to symbiotic fungus"/>
    <property type="evidence" value="ECO:0007669"/>
    <property type="project" value="UniProtKB-ARBA"/>
</dbReference>
<dbReference type="CDD" id="cd06899">
    <property type="entry name" value="lectin_legume_LecRK_Arcelin_ConA"/>
    <property type="match status" value="1"/>
</dbReference>
<dbReference type="Gene3D" id="2.60.120.200">
    <property type="match status" value="1"/>
</dbReference>
<dbReference type="InterPro" id="IPR013320">
    <property type="entry name" value="ConA-like_dom_sf"/>
</dbReference>
<dbReference type="InterPro" id="IPR016363">
    <property type="entry name" value="L-lectin"/>
</dbReference>
<dbReference type="InterPro" id="IPR000985">
    <property type="entry name" value="Lectin_LegA_CS"/>
</dbReference>
<dbReference type="InterPro" id="IPR019825">
    <property type="entry name" value="Lectin_legB_Mn/Ca_BS"/>
</dbReference>
<dbReference type="InterPro" id="IPR001220">
    <property type="entry name" value="Legume_lectin_dom"/>
</dbReference>
<dbReference type="InterPro" id="IPR050258">
    <property type="entry name" value="Leguminous_Lectin"/>
</dbReference>
<dbReference type="PANTHER" id="PTHR32401">
    <property type="entry name" value="CONCANAVALIN A-LIKE LECTIN FAMILY PROTEIN"/>
    <property type="match status" value="1"/>
</dbReference>
<dbReference type="PANTHER" id="PTHR32401:SF45">
    <property type="entry name" value="LECTIN"/>
    <property type="match status" value="1"/>
</dbReference>
<dbReference type="Pfam" id="PF00139">
    <property type="entry name" value="Lectin_legB"/>
    <property type="match status" value="1"/>
</dbReference>
<dbReference type="PIRSF" id="PIRSF002690">
    <property type="entry name" value="L-type_lectin_plant"/>
    <property type="match status" value="1"/>
</dbReference>
<dbReference type="SUPFAM" id="SSF49899">
    <property type="entry name" value="Concanavalin A-like lectins/glucanases"/>
    <property type="match status" value="1"/>
</dbReference>
<dbReference type="PROSITE" id="PS00308">
    <property type="entry name" value="LECTIN_LEGUME_ALPHA"/>
    <property type="match status" value="1"/>
</dbReference>
<dbReference type="PROSITE" id="PS00307">
    <property type="entry name" value="LECTIN_LEGUME_BETA"/>
    <property type="match status" value="1"/>
</dbReference>